<sequence length="64" mass="7255">MKNKTHKGTAKRVKVTGSGKLVREQANRRHLLEGKSSTRTRRLKGIVEVDKADTKRMKRLLGKA</sequence>
<protein>
    <recommendedName>
        <fullName evidence="1">Large ribosomal subunit protein bL35</fullName>
    </recommendedName>
    <alternativeName>
        <fullName evidence="3">50S ribosomal protein L35</fullName>
    </alternativeName>
</protein>
<organism>
    <name type="scientific">Corynebacterium glutamicum (strain ATCC 13032 / DSM 20300 / JCM 1318 / BCRC 11384 / CCUG 27702 / LMG 3730 / NBRC 12168 / NCIMB 10025 / NRRL B-2784 / 534)</name>
    <dbReference type="NCBI Taxonomy" id="196627"/>
    <lineage>
        <taxon>Bacteria</taxon>
        <taxon>Bacillati</taxon>
        <taxon>Actinomycetota</taxon>
        <taxon>Actinomycetes</taxon>
        <taxon>Mycobacteriales</taxon>
        <taxon>Corynebacteriaceae</taxon>
        <taxon>Corynebacterium</taxon>
    </lineage>
</organism>
<accession>Q8NQP7</accession>
<dbReference type="EMBL" id="BA000036">
    <property type="protein sequence ID" value="BAB98772.1"/>
    <property type="molecule type" value="Genomic_DNA"/>
</dbReference>
<dbReference type="EMBL" id="BX927152">
    <property type="protein sequence ID" value="CAF21390.1"/>
    <property type="molecule type" value="Genomic_DNA"/>
</dbReference>
<dbReference type="RefSeq" id="NP_600598.1">
    <property type="nucleotide sequence ID" value="NC_003450.3"/>
</dbReference>
<dbReference type="RefSeq" id="WP_003858721.1">
    <property type="nucleotide sequence ID" value="NC_006958.1"/>
</dbReference>
<dbReference type="SMR" id="Q8NQP7"/>
<dbReference type="STRING" id="196627.cg1564"/>
<dbReference type="GeneID" id="1019355"/>
<dbReference type="KEGG" id="cgb:cg1564"/>
<dbReference type="KEGG" id="cgl:Cgl1379"/>
<dbReference type="PATRIC" id="fig|196627.13.peg.1347"/>
<dbReference type="eggNOG" id="COG0291">
    <property type="taxonomic scope" value="Bacteria"/>
</dbReference>
<dbReference type="HOGENOM" id="CLU_169643_4_2_11"/>
<dbReference type="OrthoDB" id="9804851at2"/>
<dbReference type="BioCyc" id="CORYNE:G18NG-10958-MONOMER"/>
<dbReference type="Proteomes" id="UP000000582">
    <property type="component" value="Chromosome"/>
</dbReference>
<dbReference type="Proteomes" id="UP000001009">
    <property type="component" value="Chromosome"/>
</dbReference>
<dbReference type="GO" id="GO:0022625">
    <property type="term" value="C:cytosolic large ribosomal subunit"/>
    <property type="evidence" value="ECO:0007669"/>
    <property type="project" value="TreeGrafter"/>
</dbReference>
<dbReference type="GO" id="GO:0003735">
    <property type="term" value="F:structural constituent of ribosome"/>
    <property type="evidence" value="ECO:0007669"/>
    <property type="project" value="InterPro"/>
</dbReference>
<dbReference type="GO" id="GO:0006412">
    <property type="term" value="P:translation"/>
    <property type="evidence" value="ECO:0007669"/>
    <property type="project" value="UniProtKB-UniRule"/>
</dbReference>
<dbReference type="FunFam" id="4.10.410.60:FF:000001">
    <property type="entry name" value="50S ribosomal protein L35"/>
    <property type="match status" value="1"/>
</dbReference>
<dbReference type="Gene3D" id="4.10.410.60">
    <property type="match status" value="1"/>
</dbReference>
<dbReference type="HAMAP" id="MF_00514">
    <property type="entry name" value="Ribosomal_bL35"/>
    <property type="match status" value="1"/>
</dbReference>
<dbReference type="InterPro" id="IPR001706">
    <property type="entry name" value="Ribosomal_bL35"/>
</dbReference>
<dbReference type="InterPro" id="IPR021137">
    <property type="entry name" value="Ribosomal_bL35-like"/>
</dbReference>
<dbReference type="InterPro" id="IPR037229">
    <property type="entry name" value="Ribosomal_bL35_sf"/>
</dbReference>
<dbReference type="NCBIfam" id="TIGR00001">
    <property type="entry name" value="rpmI_bact"/>
    <property type="match status" value="1"/>
</dbReference>
<dbReference type="PANTHER" id="PTHR33343">
    <property type="entry name" value="54S RIBOSOMAL PROTEIN BL35M"/>
    <property type="match status" value="1"/>
</dbReference>
<dbReference type="PANTHER" id="PTHR33343:SF1">
    <property type="entry name" value="LARGE RIBOSOMAL SUBUNIT PROTEIN BL35M"/>
    <property type="match status" value="1"/>
</dbReference>
<dbReference type="Pfam" id="PF01632">
    <property type="entry name" value="Ribosomal_L35p"/>
    <property type="match status" value="1"/>
</dbReference>
<dbReference type="PRINTS" id="PR00064">
    <property type="entry name" value="RIBOSOMALL35"/>
</dbReference>
<dbReference type="SUPFAM" id="SSF143034">
    <property type="entry name" value="L35p-like"/>
    <property type="match status" value="1"/>
</dbReference>
<reference key="1">
    <citation type="journal article" date="2003" name="Appl. Microbiol. Biotechnol.">
        <title>The Corynebacterium glutamicum genome: features and impacts on biotechnological processes.</title>
        <authorList>
            <person name="Ikeda M."/>
            <person name="Nakagawa S."/>
        </authorList>
    </citation>
    <scope>NUCLEOTIDE SEQUENCE [LARGE SCALE GENOMIC DNA]</scope>
    <source>
        <strain>ATCC 13032 / DSM 20300 / JCM 1318 / BCRC 11384 / CCUG 27702 / LMG 3730 / NBRC 12168 / NCIMB 10025 / NRRL B-2784 / 534</strain>
    </source>
</reference>
<reference key="2">
    <citation type="journal article" date="2003" name="J. Biotechnol.">
        <title>The complete Corynebacterium glutamicum ATCC 13032 genome sequence and its impact on the production of L-aspartate-derived amino acids and vitamins.</title>
        <authorList>
            <person name="Kalinowski J."/>
            <person name="Bathe B."/>
            <person name="Bartels D."/>
            <person name="Bischoff N."/>
            <person name="Bott M."/>
            <person name="Burkovski A."/>
            <person name="Dusch N."/>
            <person name="Eggeling L."/>
            <person name="Eikmanns B.J."/>
            <person name="Gaigalat L."/>
            <person name="Goesmann A."/>
            <person name="Hartmann M."/>
            <person name="Huthmacher K."/>
            <person name="Kraemer R."/>
            <person name="Linke B."/>
            <person name="McHardy A.C."/>
            <person name="Meyer F."/>
            <person name="Moeckel B."/>
            <person name="Pfefferle W."/>
            <person name="Puehler A."/>
            <person name="Rey D.A."/>
            <person name="Rueckert C."/>
            <person name="Rupp O."/>
            <person name="Sahm H."/>
            <person name="Wendisch V.F."/>
            <person name="Wiegraebe I."/>
            <person name="Tauch A."/>
        </authorList>
    </citation>
    <scope>NUCLEOTIDE SEQUENCE [LARGE SCALE GENOMIC DNA]</scope>
    <source>
        <strain>ATCC 13032 / DSM 20300 / JCM 1318 / BCRC 11384 / CCUG 27702 / LMG 3730 / NBRC 12168 / NCIMB 10025 / NRRL B-2784 / 534</strain>
    </source>
</reference>
<evidence type="ECO:0000255" key="1">
    <source>
        <dbReference type="HAMAP-Rule" id="MF_00514"/>
    </source>
</evidence>
<evidence type="ECO:0000256" key="2">
    <source>
        <dbReference type="SAM" id="MobiDB-lite"/>
    </source>
</evidence>
<evidence type="ECO:0000305" key="3"/>
<feature type="chain" id="PRO_0000177355" description="Large ribosomal subunit protein bL35">
    <location>
        <begin position="1"/>
        <end position="64"/>
    </location>
</feature>
<feature type="region of interest" description="Disordered" evidence="2">
    <location>
        <begin position="1"/>
        <end position="29"/>
    </location>
</feature>
<feature type="compositionally biased region" description="Basic residues" evidence="2">
    <location>
        <begin position="1"/>
        <end position="14"/>
    </location>
</feature>
<gene>
    <name evidence="1" type="primary">rpmI</name>
    <name type="ordered locus">Cgl1379</name>
    <name type="ordered locus">cg1564</name>
</gene>
<name>RL35_CORGL</name>
<comment type="similarity">
    <text evidence="1">Belongs to the bacterial ribosomal protein bL35 family.</text>
</comment>
<proteinExistence type="inferred from homology"/>
<keyword id="KW-1185">Reference proteome</keyword>
<keyword id="KW-0687">Ribonucleoprotein</keyword>
<keyword id="KW-0689">Ribosomal protein</keyword>